<sequence length="238" mass="26327">MIAFIVLLSLAAVLQQSSGTVDFASESSNKKDYQKEIVDKHNALRRSVKPTARNMLRMEWNSHAAQNAKRWADRCTFAHSPPHTRTVGKLRCGENIFMSSQPFAWSGVVQAWYDEVKKFVYGIGAKPPGSVIGHYTQVVWYKSHLLGCASAKCSSTKYLYVCQYCPAGNIRGSIATPYKSGPTCGDCPSACVNGLCTNPCKYEDDFSNCKALAKNSKCQTEWIKSKCPAACFCHNKII</sequence>
<name>CRVP_NOTSC</name>
<protein>
    <recommendedName>
        <fullName>Cysteine-rich venom protein pseudechetoxin-like</fullName>
        <shortName>CRVP</shortName>
    </recommendedName>
</protein>
<dbReference type="EMBL" id="DQ084038">
    <property type="protein sequence ID" value="AAZ38983.1"/>
    <property type="molecule type" value="mRNA"/>
</dbReference>
<dbReference type="SMR" id="Q3SB04"/>
<dbReference type="GO" id="GO:0005576">
    <property type="term" value="C:extracellular region"/>
    <property type="evidence" value="ECO:0007669"/>
    <property type="project" value="UniProtKB-SubCell"/>
</dbReference>
<dbReference type="GO" id="GO:0099106">
    <property type="term" value="F:ion channel regulator activity"/>
    <property type="evidence" value="ECO:0007669"/>
    <property type="project" value="UniProtKB-KW"/>
</dbReference>
<dbReference type="GO" id="GO:0090729">
    <property type="term" value="F:toxin activity"/>
    <property type="evidence" value="ECO:0007669"/>
    <property type="project" value="UniProtKB-KW"/>
</dbReference>
<dbReference type="CDD" id="cd05383">
    <property type="entry name" value="CAP_CRISP"/>
    <property type="match status" value="1"/>
</dbReference>
<dbReference type="FunFam" id="1.10.10.740:FF:000001">
    <property type="entry name" value="Cysteine-rich secretory protein 2"/>
    <property type="match status" value="1"/>
</dbReference>
<dbReference type="FunFam" id="3.40.33.10:FF:000005">
    <property type="entry name" value="Cysteine-rich secretory protein 2"/>
    <property type="match status" value="1"/>
</dbReference>
<dbReference type="Gene3D" id="3.40.33.10">
    <property type="entry name" value="CAP"/>
    <property type="match status" value="1"/>
</dbReference>
<dbReference type="Gene3D" id="1.10.10.740">
    <property type="entry name" value="Crisp domain"/>
    <property type="match status" value="1"/>
</dbReference>
<dbReference type="InterPro" id="IPR018244">
    <property type="entry name" value="Allrgn_V5/Tpx1_CS"/>
</dbReference>
<dbReference type="InterPro" id="IPR014044">
    <property type="entry name" value="CAP_dom"/>
</dbReference>
<dbReference type="InterPro" id="IPR035940">
    <property type="entry name" value="CAP_sf"/>
</dbReference>
<dbReference type="InterPro" id="IPR042076">
    <property type="entry name" value="Crisp-like_dom"/>
</dbReference>
<dbReference type="InterPro" id="IPR001283">
    <property type="entry name" value="CRISP-related"/>
</dbReference>
<dbReference type="InterPro" id="IPR013871">
    <property type="entry name" value="Cysteine_rich_secretory"/>
</dbReference>
<dbReference type="InterPro" id="IPR034117">
    <property type="entry name" value="SCP_CRISP"/>
</dbReference>
<dbReference type="InterPro" id="IPR003582">
    <property type="entry name" value="ShKT_dom"/>
</dbReference>
<dbReference type="PANTHER" id="PTHR10334">
    <property type="entry name" value="CYSTEINE-RICH SECRETORY PROTEIN-RELATED"/>
    <property type="match status" value="1"/>
</dbReference>
<dbReference type="Pfam" id="PF00188">
    <property type="entry name" value="CAP"/>
    <property type="match status" value="1"/>
</dbReference>
<dbReference type="Pfam" id="PF08562">
    <property type="entry name" value="Crisp"/>
    <property type="match status" value="1"/>
</dbReference>
<dbReference type="PRINTS" id="PR00837">
    <property type="entry name" value="V5TPXLIKE"/>
</dbReference>
<dbReference type="SMART" id="SM00198">
    <property type="entry name" value="SCP"/>
    <property type="match status" value="1"/>
</dbReference>
<dbReference type="SUPFAM" id="SSF57546">
    <property type="entry name" value="Crisp domain-like"/>
    <property type="match status" value="1"/>
</dbReference>
<dbReference type="SUPFAM" id="SSF55797">
    <property type="entry name" value="PR-1-like"/>
    <property type="match status" value="1"/>
</dbReference>
<dbReference type="PROSITE" id="PS01009">
    <property type="entry name" value="CRISP_1"/>
    <property type="match status" value="1"/>
</dbReference>
<dbReference type="PROSITE" id="PS01010">
    <property type="entry name" value="CRISP_2"/>
    <property type="match status" value="1"/>
</dbReference>
<dbReference type="PROSITE" id="PS51670">
    <property type="entry name" value="SHKT"/>
    <property type="match status" value="1"/>
</dbReference>
<comment type="function">
    <text evidence="1">Blocks olfactory (CNGA2) and retinal (CNGA1) CNG channel currents. Does not affect neither depolarization- nor caffeine-induced contraction of smooth muscle (By similarity).</text>
</comment>
<comment type="subcellular location">
    <subcellularLocation>
        <location evidence="1">Secreted</location>
    </subcellularLocation>
</comment>
<comment type="tissue specificity">
    <text>Expressed by the venom gland.</text>
</comment>
<comment type="similarity">
    <text evidence="3">Belongs to the CRISP family.</text>
</comment>
<evidence type="ECO:0000250" key="1"/>
<evidence type="ECO:0000255" key="2">
    <source>
        <dbReference type="PROSITE-ProRule" id="PRU01005"/>
    </source>
</evidence>
<evidence type="ECO:0000305" key="3"/>
<accession>Q3SB04</accession>
<keyword id="KW-1015">Disulfide bond</keyword>
<keyword id="KW-0872">Ion channel impairing toxin</keyword>
<keyword id="KW-0528">Neurotoxin</keyword>
<keyword id="KW-0964">Secreted</keyword>
<keyword id="KW-0732">Signal</keyword>
<keyword id="KW-0800">Toxin</keyword>
<proteinExistence type="evidence at transcript level"/>
<reference key="1">
    <citation type="journal article" date="2005" name="Cell. Mol. Life Sci.">
        <title>Identification and analysis of venom gland-specific genes from the coastal taipan (Oxyuranus scutellatus) and related species.</title>
        <authorList>
            <person name="St Pierre L."/>
            <person name="Woods R."/>
            <person name="Earl S.T.H."/>
            <person name="Masci P.P."/>
            <person name="Lavin M.F."/>
        </authorList>
    </citation>
    <scope>NUCLEOTIDE SEQUENCE [MRNA]</scope>
    <source>
        <tissue>Venom gland</tissue>
    </source>
</reference>
<feature type="signal peptide" evidence="1">
    <location>
        <begin position="1"/>
        <end position="19"/>
    </location>
</feature>
<feature type="propeptide" id="PRO_0000380665" evidence="1">
    <location>
        <begin position="20"/>
        <end position="28"/>
    </location>
</feature>
<feature type="chain" id="PRO_5000140335" description="Cysteine-rich venom protein pseudechetoxin-like">
    <location>
        <begin position="29"/>
        <end position="238"/>
    </location>
</feature>
<feature type="domain" description="SCP">
    <location>
        <begin position="38"/>
        <end position="164"/>
    </location>
</feature>
<feature type="domain" description="ShKT" evidence="2">
    <location>
        <begin position="200"/>
        <end position="233"/>
    </location>
</feature>
<feature type="disulfide bond" evidence="2">
    <location>
        <begin position="75"/>
        <end position="153"/>
    </location>
</feature>
<feature type="disulfide bond" evidence="2">
    <location>
        <begin position="92"/>
        <end position="165"/>
    </location>
</feature>
<feature type="disulfide bond" evidence="2">
    <location>
        <begin position="148"/>
        <end position="162"/>
    </location>
</feature>
<feature type="disulfide bond" evidence="2">
    <location>
        <begin position="184"/>
        <end position="191"/>
    </location>
</feature>
<feature type="disulfide bond" evidence="2">
    <location>
        <begin position="187"/>
        <end position="196"/>
    </location>
</feature>
<feature type="disulfide bond" evidence="2">
    <location>
        <begin position="200"/>
        <end position="233"/>
    </location>
</feature>
<feature type="disulfide bond" evidence="2">
    <location>
        <begin position="209"/>
        <end position="227"/>
    </location>
</feature>
<feature type="disulfide bond" evidence="2">
    <location>
        <begin position="218"/>
        <end position="231"/>
    </location>
</feature>
<organism>
    <name type="scientific">Notechis scutatus scutatus</name>
    <name type="common">Mainland tiger snake</name>
    <name type="synonym">Common tiger snake</name>
    <dbReference type="NCBI Taxonomy" id="70142"/>
    <lineage>
        <taxon>Eukaryota</taxon>
        <taxon>Metazoa</taxon>
        <taxon>Chordata</taxon>
        <taxon>Craniata</taxon>
        <taxon>Vertebrata</taxon>
        <taxon>Euteleostomi</taxon>
        <taxon>Lepidosauria</taxon>
        <taxon>Squamata</taxon>
        <taxon>Bifurcata</taxon>
        <taxon>Unidentata</taxon>
        <taxon>Episquamata</taxon>
        <taxon>Toxicofera</taxon>
        <taxon>Serpentes</taxon>
        <taxon>Colubroidea</taxon>
        <taxon>Elapidae</taxon>
        <taxon>Hydrophiinae</taxon>
        <taxon>Notechis</taxon>
    </lineage>
</organism>